<dbReference type="EMBL" id="AY147523">
    <property type="protein sequence ID" value="AAN32192.1"/>
    <property type="molecule type" value="Genomic_DNA"/>
</dbReference>
<dbReference type="SMR" id="Q67I10"/>
<dbReference type="GO" id="GO:0009535">
    <property type="term" value="C:chloroplast thylakoid membrane"/>
    <property type="evidence" value="ECO:0007669"/>
    <property type="project" value="UniProtKB-SubCell"/>
</dbReference>
<dbReference type="GO" id="GO:0015979">
    <property type="term" value="P:photosynthesis"/>
    <property type="evidence" value="ECO:0007669"/>
    <property type="project" value="InterPro"/>
</dbReference>
<dbReference type="HAMAP" id="MF_00293">
    <property type="entry name" value="PSII_PsbN"/>
    <property type="match status" value="1"/>
</dbReference>
<dbReference type="InterPro" id="IPR003398">
    <property type="entry name" value="PSII_PsbN"/>
</dbReference>
<dbReference type="PANTHER" id="PTHR35326">
    <property type="entry name" value="PROTEIN PSBN"/>
    <property type="match status" value="1"/>
</dbReference>
<dbReference type="PANTHER" id="PTHR35326:SF3">
    <property type="entry name" value="PROTEIN PSBN"/>
    <property type="match status" value="1"/>
</dbReference>
<dbReference type="Pfam" id="PF02468">
    <property type="entry name" value="PsbN"/>
    <property type="match status" value="1"/>
</dbReference>
<accession>Q67I10</accession>
<geneLocation type="chloroplast"/>
<feature type="chain" id="PRO_0000207886" description="Protein PsbN">
    <location>
        <begin position="1"/>
        <end position="43"/>
    </location>
</feature>
<feature type="transmembrane region" description="Helical" evidence="1">
    <location>
        <begin position="5"/>
        <end position="27"/>
    </location>
</feature>
<keyword id="KW-0150">Chloroplast</keyword>
<keyword id="KW-0472">Membrane</keyword>
<keyword id="KW-0934">Plastid</keyword>
<keyword id="KW-0793">Thylakoid</keyword>
<keyword id="KW-0812">Transmembrane</keyword>
<keyword id="KW-1133">Transmembrane helix</keyword>
<protein>
    <recommendedName>
        <fullName evidence="1">Protein PsbN</fullName>
    </recommendedName>
</protein>
<gene>
    <name evidence="1" type="primary">psbN</name>
</gene>
<name>PSBN_COECR</name>
<evidence type="ECO:0000255" key="1">
    <source>
        <dbReference type="HAMAP-Rule" id="MF_00293"/>
    </source>
</evidence>
<sequence>METATLVAISISGLLVSFTGYALYTAFGQPSQKLRDPFEEHGD</sequence>
<comment type="function">
    <text evidence="1">May play a role in photosystem I and II biogenesis.</text>
</comment>
<comment type="subcellular location">
    <subcellularLocation>
        <location evidence="1">Plastid</location>
        <location evidence="1">Chloroplast thylakoid membrane</location>
        <topology evidence="1">Single-pass membrane protein</topology>
    </subcellularLocation>
</comment>
<comment type="similarity">
    <text evidence="1">Belongs to the PsbN family.</text>
</comment>
<comment type="caution">
    <text evidence="1">Originally thought to be a component of PSII; based on experiments in Synechocystis, N.tabacum and barley, and its absence from PSII in T.elongatus and T.vulcanus, this is probably not true.</text>
</comment>
<reference key="1">
    <citation type="submission" date="2002-09" db="EMBL/GenBank/DDBJ databases">
        <title>Phylogenetic relationships among the major lineages of Asparagales based on a large chloroplast data set.</title>
        <authorList>
            <person name="McPherson M.A."/>
            <person name="Rai H.S."/>
            <person name="Wong W.A."/>
            <person name="Graham S.W."/>
        </authorList>
    </citation>
    <scope>NUCLEOTIDE SEQUENCE [GENOMIC DNA]</scope>
</reference>
<organism>
    <name type="scientific">Coelogyne cristata</name>
    <name type="common">Orchid</name>
    <name type="synonym">Cymbidium speciosissimum</name>
    <dbReference type="NCBI Taxonomy" id="38221"/>
    <lineage>
        <taxon>Eukaryota</taxon>
        <taxon>Viridiplantae</taxon>
        <taxon>Streptophyta</taxon>
        <taxon>Embryophyta</taxon>
        <taxon>Tracheophyta</taxon>
        <taxon>Spermatophyta</taxon>
        <taxon>Magnoliopsida</taxon>
        <taxon>Liliopsida</taxon>
        <taxon>Asparagales</taxon>
        <taxon>Orchidaceae</taxon>
        <taxon>Epidendroideae</taxon>
        <taxon>Arethuseae</taxon>
        <taxon>Coelogyninae</taxon>
        <taxon>Coelogyne</taxon>
    </lineage>
</organism>
<proteinExistence type="inferred from homology"/>